<protein>
    <recommendedName>
        <fullName>Krueppel-like factor 17</fullName>
    </recommendedName>
    <alternativeName>
        <fullName>Zinc finger protein 393</fullName>
    </alternativeName>
</protein>
<organism>
    <name type="scientific">Homo sapiens</name>
    <name type="common">Human</name>
    <dbReference type="NCBI Taxonomy" id="9606"/>
    <lineage>
        <taxon>Eukaryota</taxon>
        <taxon>Metazoa</taxon>
        <taxon>Chordata</taxon>
        <taxon>Craniata</taxon>
        <taxon>Vertebrata</taxon>
        <taxon>Euteleostomi</taxon>
        <taxon>Mammalia</taxon>
        <taxon>Eutheria</taxon>
        <taxon>Euarchontoglires</taxon>
        <taxon>Primates</taxon>
        <taxon>Haplorrhini</taxon>
        <taxon>Catarrhini</taxon>
        <taxon>Hominidae</taxon>
        <taxon>Homo</taxon>
    </lineage>
</organism>
<accession>Q5JT82</accession>
<accession>Q86VQ7</accession>
<accession>Q8N805</accession>
<gene>
    <name type="primary">KLF17</name>
    <name type="synonym">ZNF393</name>
</gene>
<sequence>MYGRPQAEMEQEAGELSRWQAAHQAAQDNENSAPILNMSSSSGSSGVHTSWNQGLPSIQHFPHSAEMLGSPLVSVEAPGQNVNEGGPQFSMPLPERGMSYCPQATLTPSRMIYCQRMSPPQQEMTIFSGPQLMPVGEPNIPRVARPFGGNLRMPPNGLPVSASTGIPIMSHTGNPPVPYPGLSTVPSDETLLGPTVPSTEAQAVLPSMAQMLPPQDAHDLGMPPAESQSLLVLGSQDSLVSQPDSQEGPFLPEQPGPAPQTVEKNSRPQEGTGRRGSSEARPYCCNYENCGKAYTKRSHLVSHQRKHTGERPYSCNWESCSWSFFRSDELRRHMRVHTRYRPYKCDQCSREFMRSDHLKQHQKTHRPGPSDPQANNNNGEQDSPPAAGP</sequence>
<proteinExistence type="evidence at protein level"/>
<comment type="function">
    <text evidence="1 6">Transcription repressor that binds to the promoter of target genes and prevents their expression. Acts as a negative regulator of epithelial-mesenchymal transition and metastasis in breast cancer. Specifically binds the 5'-CACCC-3' sequence in the promoter of ID1, a key metastasis regulator in breast cancer, and repress its expression. May be a germ cell-specific transcription factor that plays important roles in spermatid differentiation and oocyte development (By similarity).</text>
</comment>
<comment type="interaction">
    <interactant intactId="EBI-10292791">
        <id>Q5JT82</id>
    </interactant>
    <interactant intactId="EBI-10292696">
        <id>Q96Q77</id>
        <label>CIB3</label>
    </interactant>
    <organismsDiffer>false</organismsDiffer>
    <experiments>6</experiments>
</comment>
<comment type="subcellular location">
    <subcellularLocation>
        <location evidence="7">Nucleus</location>
    </subcellularLocation>
</comment>
<comment type="similarity">
    <text evidence="7">Belongs to the Sp1 C2H2-type zinc-finger protein family.</text>
</comment>
<reference key="1">
    <citation type="journal article" date="2004" name="Nat. Genet.">
        <title>Complete sequencing and characterization of 21,243 full-length human cDNAs.</title>
        <authorList>
            <person name="Ota T."/>
            <person name="Suzuki Y."/>
            <person name="Nishikawa T."/>
            <person name="Otsuki T."/>
            <person name="Sugiyama T."/>
            <person name="Irie R."/>
            <person name="Wakamatsu A."/>
            <person name="Hayashi K."/>
            <person name="Sato H."/>
            <person name="Nagai K."/>
            <person name="Kimura K."/>
            <person name="Makita H."/>
            <person name="Sekine M."/>
            <person name="Obayashi M."/>
            <person name="Nishi T."/>
            <person name="Shibahara T."/>
            <person name="Tanaka T."/>
            <person name="Ishii S."/>
            <person name="Yamamoto J."/>
            <person name="Saito K."/>
            <person name="Kawai Y."/>
            <person name="Isono Y."/>
            <person name="Nakamura Y."/>
            <person name="Nagahari K."/>
            <person name="Murakami K."/>
            <person name="Yasuda T."/>
            <person name="Iwayanagi T."/>
            <person name="Wagatsuma M."/>
            <person name="Shiratori A."/>
            <person name="Sudo H."/>
            <person name="Hosoiri T."/>
            <person name="Kaku Y."/>
            <person name="Kodaira H."/>
            <person name="Kondo H."/>
            <person name="Sugawara M."/>
            <person name="Takahashi M."/>
            <person name="Kanda K."/>
            <person name="Yokoi T."/>
            <person name="Furuya T."/>
            <person name="Kikkawa E."/>
            <person name="Omura Y."/>
            <person name="Abe K."/>
            <person name="Kamihara K."/>
            <person name="Katsuta N."/>
            <person name="Sato K."/>
            <person name="Tanikawa M."/>
            <person name="Yamazaki M."/>
            <person name="Ninomiya K."/>
            <person name="Ishibashi T."/>
            <person name="Yamashita H."/>
            <person name="Murakawa K."/>
            <person name="Fujimori K."/>
            <person name="Tanai H."/>
            <person name="Kimata M."/>
            <person name="Watanabe M."/>
            <person name="Hiraoka S."/>
            <person name="Chiba Y."/>
            <person name="Ishida S."/>
            <person name="Ono Y."/>
            <person name="Takiguchi S."/>
            <person name="Watanabe S."/>
            <person name="Yosida M."/>
            <person name="Hotuta T."/>
            <person name="Kusano J."/>
            <person name="Kanehori K."/>
            <person name="Takahashi-Fujii A."/>
            <person name="Hara H."/>
            <person name="Tanase T.-O."/>
            <person name="Nomura Y."/>
            <person name="Togiya S."/>
            <person name="Komai F."/>
            <person name="Hara R."/>
            <person name="Takeuchi K."/>
            <person name="Arita M."/>
            <person name="Imose N."/>
            <person name="Musashino K."/>
            <person name="Yuuki H."/>
            <person name="Oshima A."/>
            <person name="Sasaki N."/>
            <person name="Aotsuka S."/>
            <person name="Yoshikawa Y."/>
            <person name="Matsunawa H."/>
            <person name="Ichihara T."/>
            <person name="Shiohata N."/>
            <person name="Sano S."/>
            <person name="Moriya S."/>
            <person name="Momiyama H."/>
            <person name="Satoh N."/>
            <person name="Takami S."/>
            <person name="Terashima Y."/>
            <person name="Suzuki O."/>
            <person name="Nakagawa S."/>
            <person name="Senoh A."/>
            <person name="Mizoguchi H."/>
            <person name="Goto Y."/>
            <person name="Shimizu F."/>
            <person name="Wakebe H."/>
            <person name="Hishigaki H."/>
            <person name="Watanabe T."/>
            <person name="Sugiyama A."/>
            <person name="Takemoto M."/>
            <person name="Kawakami B."/>
            <person name="Yamazaki M."/>
            <person name="Watanabe K."/>
            <person name="Kumagai A."/>
            <person name="Itakura S."/>
            <person name="Fukuzumi Y."/>
            <person name="Fujimori Y."/>
            <person name="Komiyama M."/>
            <person name="Tashiro H."/>
            <person name="Tanigami A."/>
            <person name="Fujiwara T."/>
            <person name="Ono T."/>
            <person name="Yamada K."/>
            <person name="Fujii Y."/>
            <person name="Ozaki K."/>
            <person name="Hirao M."/>
            <person name="Ohmori Y."/>
            <person name="Kawabata A."/>
            <person name="Hikiji T."/>
            <person name="Kobatake N."/>
            <person name="Inagaki H."/>
            <person name="Ikema Y."/>
            <person name="Okamoto S."/>
            <person name="Okitani R."/>
            <person name="Kawakami T."/>
            <person name="Noguchi S."/>
            <person name="Itoh T."/>
            <person name="Shigeta K."/>
            <person name="Senba T."/>
            <person name="Matsumura K."/>
            <person name="Nakajima Y."/>
            <person name="Mizuno T."/>
            <person name="Morinaga M."/>
            <person name="Sasaki M."/>
            <person name="Togashi T."/>
            <person name="Oyama M."/>
            <person name="Hata H."/>
            <person name="Watanabe M."/>
            <person name="Komatsu T."/>
            <person name="Mizushima-Sugano J."/>
            <person name="Satoh T."/>
            <person name="Shirai Y."/>
            <person name="Takahashi Y."/>
            <person name="Nakagawa K."/>
            <person name="Okumura K."/>
            <person name="Nagase T."/>
            <person name="Nomura N."/>
            <person name="Kikuchi H."/>
            <person name="Masuho Y."/>
            <person name="Yamashita R."/>
            <person name="Nakai K."/>
            <person name="Yada T."/>
            <person name="Nakamura Y."/>
            <person name="Ohara O."/>
            <person name="Isogai T."/>
            <person name="Sugano S."/>
        </authorList>
    </citation>
    <scope>NUCLEOTIDE SEQUENCE [LARGE SCALE MRNA]</scope>
    <scope>VARIANTS ASN-35 AND THR-57</scope>
    <source>
        <tissue>Testis</tissue>
    </source>
</reference>
<reference key="2">
    <citation type="journal article" date="2006" name="Nature">
        <title>The DNA sequence and biological annotation of human chromosome 1.</title>
        <authorList>
            <person name="Gregory S.G."/>
            <person name="Barlow K.F."/>
            <person name="McLay K.E."/>
            <person name="Kaul R."/>
            <person name="Swarbreck D."/>
            <person name="Dunham A."/>
            <person name="Scott C.E."/>
            <person name="Howe K.L."/>
            <person name="Woodfine K."/>
            <person name="Spencer C.C.A."/>
            <person name="Jones M.C."/>
            <person name="Gillson C."/>
            <person name="Searle S."/>
            <person name="Zhou Y."/>
            <person name="Kokocinski F."/>
            <person name="McDonald L."/>
            <person name="Evans R."/>
            <person name="Phillips K."/>
            <person name="Atkinson A."/>
            <person name="Cooper R."/>
            <person name="Jones C."/>
            <person name="Hall R.E."/>
            <person name="Andrews T.D."/>
            <person name="Lloyd C."/>
            <person name="Ainscough R."/>
            <person name="Almeida J.P."/>
            <person name="Ambrose K.D."/>
            <person name="Anderson F."/>
            <person name="Andrew R.W."/>
            <person name="Ashwell R.I.S."/>
            <person name="Aubin K."/>
            <person name="Babbage A.K."/>
            <person name="Bagguley C.L."/>
            <person name="Bailey J."/>
            <person name="Beasley H."/>
            <person name="Bethel G."/>
            <person name="Bird C.P."/>
            <person name="Bray-Allen S."/>
            <person name="Brown J.Y."/>
            <person name="Brown A.J."/>
            <person name="Buckley D."/>
            <person name="Burton J."/>
            <person name="Bye J."/>
            <person name="Carder C."/>
            <person name="Chapman J.C."/>
            <person name="Clark S.Y."/>
            <person name="Clarke G."/>
            <person name="Clee C."/>
            <person name="Cobley V."/>
            <person name="Collier R.E."/>
            <person name="Corby N."/>
            <person name="Coville G.J."/>
            <person name="Davies J."/>
            <person name="Deadman R."/>
            <person name="Dunn M."/>
            <person name="Earthrowl M."/>
            <person name="Ellington A.G."/>
            <person name="Errington H."/>
            <person name="Frankish A."/>
            <person name="Frankland J."/>
            <person name="French L."/>
            <person name="Garner P."/>
            <person name="Garnett J."/>
            <person name="Gay L."/>
            <person name="Ghori M.R.J."/>
            <person name="Gibson R."/>
            <person name="Gilby L.M."/>
            <person name="Gillett W."/>
            <person name="Glithero R.J."/>
            <person name="Grafham D.V."/>
            <person name="Griffiths C."/>
            <person name="Griffiths-Jones S."/>
            <person name="Grocock R."/>
            <person name="Hammond S."/>
            <person name="Harrison E.S.I."/>
            <person name="Hart E."/>
            <person name="Haugen E."/>
            <person name="Heath P.D."/>
            <person name="Holmes S."/>
            <person name="Holt K."/>
            <person name="Howden P.J."/>
            <person name="Hunt A.R."/>
            <person name="Hunt S.E."/>
            <person name="Hunter G."/>
            <person name="Isherwood J."/>
            <person name="James R."/>
            <person name="Johnson C."/>
            <person name="Johnson D."/>
            <person name="Joy A."/>
            <person name="Kay M."/>
            <person name="Kershaw J.K."/>
            <person name="Kibukawa M."/>
            <person name="Kimberley A.M."/>
            <person name="King A."/>
            <person name="Knights A.J."/>
            <person name="Lad H."/>
            <person name="Laird G."/>
            <person name="Lawlor S."/>
            <person name="Leongamornlert D.A."/>
            <person name="Lloyd D.M."/>
            <person name="Loveland J."/>
            <person name="Lovell J."/>
            <person name="Lush M.J."/>
            <person name="Lyne R."/>
            <person name="Martin S."/>
            <person name="Mashreghi-Mohammadi M."/>
            <person name="Matthews L."/>
            <person name="Matthews N.S.W."/>
            <person name="McLaren S."/>
            <person name="Milne S."/>
            <person name="Mistry S."/>
            <person name="Moore M.J.F."/>
            <person name="Nickerson T."/>
            <person name="O'Dell C.N."/>
            <person name="Oliver K."/>
            <person name="Palmeiri A."/>
            <person name="Palmer S.A."/>
            <person name="Parker A."/>
            <person name="Patel D."/>
            <person name="Pearce A.V."/>
            <person name="Peck A.I."/>
            <person name="Pelan S."/>
            <person name="Phelps K."/>
            <person name="Phillimore B.J."/>
            <person name="Plumb R."/>
            <person name="Rajan J."/>
            <person name="Raymond C."/>
            <person name="Rouse G."/>
            <person name="Saenphimmachak C."/>
            <person name="Sehra H.K."/>
            <person name="Sheridan E."/>
            <person name="Shownkeen R."/>
            <person name="Sims S."/>
            <person name="Skuce C.D."/>
            <person name="Smith M."/>
            <person name="Steward C."/>
            <person name="Subramanian S."/>
            <person name="Sycamore N."/>
            <person name="Tracey A."/>
            <person name="Tromans A."/>
            <person name="Van Helmond Z."/>
            <person name="Wall M."/>
            <person name="Wallis J.M."/>
            <person name="White S."/>
            <person name="Whitehead S.L."/>
            <person name="Wilkinson J.E."/>
            <person name="Willey D.L."/>
            <person name="Williams H."/>
            <person name="Wilming L."/>
            <person name="Wray P.W."/>
            <person name="Wu Z."/>
            <person name="Coulson A."/>
            <person name="Vaudin M."/>
            <person name="Sulston J.E."/>
            <person name="Durbin R.M."/>
            <person name="Hubbard T."/>
            <person name="Wooster R."/>
            <person name="Dunham I."/>
            <person name="Carter N.P."/>
            <person name="McVean G."/>
            <person name="Ross M.T."/>
            <person name="Harrow J."/>
            <person name="Olson M.V."/>
            <person name="Beck S."/>
            <person name="Rogers J."/>
            <person name="Bentley D.R."/>
        </authorList>
    </citation>
    <scope>NUCLEOTIDE SEQUENCE [LARGE SCALE GENOMIC DNA]</scope>
</reference>
<reference key="3">
    <citation type="journal article" date="2004" name="Genome Res.">
        <title>The status, quality, and expansion of the NIH full-length cDNA project: the Mammalian Gene Collection (MGC).</title>
        <authorList>
            <consortium name="The MGC Project Team"/>
        </authorList>
    </citation>
    <scope>NUCLEOTIDE SEQUENCE [LARGE SCALE MRNA]</scope>
    <scope>VARIANTS THR-57 AND SER-156</scope>
    <source>
        <tissue>Brain</tissue>
    </source>
</reference>
<reference key="4">
    <citation type="journal article" date="2006" name="Genomics">
        <title>Human KLF17 is a new member of the Sp/KLF family of transcription factors.</title>
        <authorList>
            <person name="van Vliet J."/>
            <person name="Crofts L.A."/>
            <person name="Quinlan K.G.R."/>
            <person name="Czolij R."/>
            <person name="Perkins A.C."/>
            <person name="Crossley M."/>
        </authorList>
    </citation>
    <scope>FUNCTION</scope>
    <scope>DNA-BINDING</scope>
</reference>
<keyword id="KW-0010">Activator</keyword>
<keyword id="KW-0238">DNA-binding</keyword>
<keyword id="KW-0479">Metal-binding</keyword>
<keyword id="KW-0539">Nucleus</keyword>
<keyword id="KW-1267">Proteomics identification</keyword>
<keyword id="KW-1185">Reference proteome</keyword>
<keyword id="KW-0677">Repeat</keyword>
<keyword id="KW-0678">Repressor</keyword>
<keyword id="KW-0804">Transcription</keyword>
<keyword id="KW-0805">Transcription regulation</keyword>
<keyword id="KW-0862">Zinc</keyword>
<keyword id="KW-0863">Zinc-finger</keyword>
<dbReference type="EMBL" id="AK097479">
    <property type="protein sequence ID" value="BAC05070.1"/>
    <property type="molecule type" value="mRNA"/>
</dbReference>
<dbReference type="EMBL" id="AL356653">
    <property type="status" value="NOT_ANNOTATED_CDS"/>
    <property type="molecule type" value="Genomic_DNA"/>
</dbReference>
<dbReference type="EMBL" id="BC049844">
    <property type="protein sequence ID" value="AAH49844.1"/>
    <property type="molecule type" value="mRNA"/>
</dbReference>
<dbReference type="CCDS" id="CCDS508.1"/>
<dbReference type="RefSeq" id="NP_775755.3">
    <property type="nucleotide sequence ID" value="NM_173484.3"/>
</dbReference>
<dbReference type="SMR" id="Q5JT82"/>
<dbReference type="BioGRID" id="126099">
    <property type="interactions" value="2"/>
</dbReference>
<dbReference type="FunCoup" id="Q5JT82">
    <property type="interactions" value="34"/>
</dbReference>
<dbReference type="IntAct" id="Q5JT82">
    <property type="interactions" value="2"/>
</dbReference>
<dbReference type="STRING" id="9606.ENSP00000361373"/>
<dbReference type="GlyGen" id="Q5JT82">
    <property type="glycosylation" value="1 site"/>
</dbReference>
<dbReference type="iPTMnet" id="Q5JT82"/>
<dbReference type="PhosphoSitePlus" id="Q5JT82"/>
<dbReference type="BioMuta" id="KLF17"/>
<dbReference type="DMDM" id="74762198"/>
<dbReference type="MassIVE" id="Q5JT82"/>
<dbReference type="PaxDb" id="9606-ENSP00000361373"/>
<dbReference type="PeptideAtlas" id="Q5JT82"/>
<dbReference type="Antibodypedia" id="18431">
    <property type="antibodies" value="201 antibodies from 31 providers"/>
</dbReference>
<dbReference type="DNASU" id="128209"/>
<dbReference type="Ensembl" id="ENST00000372299.4">
    <property type="protein sequence ID" value="ENSP00000361373.3"/>
    <property type="gene ID" value="ENSG00000171872.5"/>
</dbReference>
<dbReference type="GeneID" id="128209"/>
<dbReference type="KEGG" id="hsa:128209"/>
<dbReference type="MANE-Select" id="ENST00000372299.4">
    <property type="protein sequence ID" value="ENSP00000361373.3"/>
    <property type="RefSeq nucleotide sequence ID" value="NM_173484.4"/>
    <property type="RefSeq protein sequence ID" value="NP_775755.3"/>
</dbReference>
<dbReference type="UCSC" id="uc001clp.4">
    <property type="organism name" value="human"/>
</dbReference>
<dbReference type="AGR" id="HGNC:18830"/>
<dbReference type="CTD" id="128209"/>
<dbReference type="DisGeNET" id="128209"/>
<dbReference type="GeneCards" id="KLF17"/>
<dbReference type="HGNC" id="HGNC:18830">
    <property type="gene designation" value="KLF17"/>
</dbReference>
<dbReference type="HPA" id="ENSG00000171872">
    <property type="expression patterns" value="Tissue enriched (testis)"/>
</dbReference>
<dbReference type="MIM" id="609602">
    <property type="type" value="gene"/>
</dbReference>
<dbReference type="neXtProt" id="NX_Q5JT82"/>
<dbReference type="OpenTargets" id="ENSG00000171872"/>
<dbReference type="PharmGKB" id="PA134877071"/>
<dbReference type="VEuPathDB" id="HostDB:ENSG00000171872"/>
<dbReference type="eggNOG" id="KOG1721">
    <property type="taxonomic scope" value="Eukaryota"/>
</dbReference>
<dbReference type="GeneTree" id="ENSGT00940000162020"/>
<dbReference type="HOGENOM" id="CLU_827795_0_0_1"/>
<dbReference type="InParanoid" id="Q5JT82"/>
<dbReference type="OMA" id="MMPLGEP"/>
<dbReference type="OrthoDB" id="6077919at2759"/>
<dbReference type="PAN-GO" id="Q5JT82">
    <property type="GO annotations" value="3 GO annotations based on evolutionary models"/>
</dbReference>
<dbReference type="PhylomeDB" id="Q5JT82"/>
<dbReference type="TreeFam" id="TF315506"/>
<dbReference type="PathwayCommons" id="Q5JT82"/>
<dbReference type="SignaLink" id="Q5JT82"/>
<dbReference type="BioGRID-ORCS" id="128209">
    <property type="hits" value="23 hits in 1165 CRISPR screens"/>
</dbReference>
<dbReference type="ChiTaRS" id="KLF17">
    <property type="organism name" value="human"/>
</dbReference>
<dbReference type="GeneWiki" id="KLF17"/>
<dbReference type="GenomeRNAi" id="128209"/>
<dbReference type="Pharos" id="Q5JT82">
    <property type="development level" value="Tbio"/>
</dbReference>
<dbReference type="PRO" id="PR:Q5JT82"/>
<dbReference type="Proteomes" id="UP000005640">
    <property type="component" value="Chromosome 1"/>
</dbReference>
<dbReference type="RNAct" id="Q5JT82">
    <property type="molecule type" value="protein"/>
</dbReference>
<dbReference type="Bgee" id="ENSG00000171872">
    <property type="expression patterns" value="Expressed in left testis and 63 other cell types or tissues"/>
</dbReference>
<dbReference type="ExpressionAtlas" id="Q5JT82">
    <property type="expression patterns" value="baseline and differential"/>
</dbReference>
<dbReference type="GO" id="GO:0000785">
    <property type="term" value="C:chromatin"/>
    <property type="evidence" value="ECO:0000247"/>
    <property type="project" value="NTNU_SB"/>
</dbReference>
<dbReference type="GO" id="GO:0005634">
    <property type="term" value="C:nucleus"/>
    <property type="evidence" value="ECO:0007669"/>
    <property type="project" value="UniProtKB-SubCell"/>
</dbReference>
<dbReference type="GO" id="GO:0003700">
    <property type="term" value="F:DNA-binding transcription factor activity"/>
    <property type="evidence" value="ECO:0000250"/>
    <property type="project" value="UniProtKB"/>
</dbReference>
<dbReference type="GO" id="GO:0000981">
    <property type="term" value="F:DNA-binding transcription factor activity, RNA polymerase II-specific"/>
    <property type="evidence" value="ECO:0000247"/>
    <property type="project" value="NTNU_SB"/>
</dbReference>
<dbReference type="GO" id="GO:0000978">
    <property type="term" value="F:RNA polymerase II cis-regulatory region sequence-specific DNA binding"/>
    <property type="evidence" value="ECO:0000318"/>
    <property type="project" value="GO_Central"/>
</dbReference>
<dbReference type="GO" id="GO:1990837">
    <property type="term" value="F:sequence-specific double-stranded DNA binding"/>
    <property type="evidence" value="ECO:0000314"/>
    <property type="project" value="ARUK-UCL"/>
</dbReference>
<dbReference type="GO" id="GO:0000976">
    <property type="term" value="F:transcription cis-regulatory region binding"/>
    <property type="evidence" value="ECO:0000250"/>
    <property type="project" value="UniProtKB"/>
</dbReference>
<dbReference type="GO" id="GO:0008270">
    <property type="term" value="F:zinc ion binding"/>
    <property type="evidence" value="ECO:0007669"/>
    <property type="project" value="UniProtKB-KW"/>
</dbReference>
<dbReference type="GO" id="GO:0006357">
    <property type="term" value="P:regulation of transcription by RNA polymerase II"/>
    <property type="evidence" value="ECO:0000250"/>
    <property type="project" value="UniProtKB"/>
</dbReference>
<dbReference type="CDD" id="cd21574">
    <property type="entry name" value="KLF17_N"/>
    <property type="match status" value="1"/>
</dbReference>
<dbReference type="FunFam" id="3.30.160.60:FF:001977">
    <property type="entry name" value="Krueppel-like factor 17"/>
    <property type="match status" value="1"/>
</dbReference>
<dbReference type="FunFam" id="3.30.160.60:FF:002051">
    <property type="entry name" value="Krueppel-like factor 17"/>
    <property type="match status" value="1"/>
</dbReference>
<dbReference type="FunFam" id="3.30.160.60:FF:002219">
    <property type="entry name" value="Kruppel like factor 17"/>
    <property type="match status" value="1"/>
</dbReference>
<dbReference type="Gene3D" id="3.30.160.60">
    <property type="entry name" value="Classic Zinc Finger"/>
    <property type="match status" value="3"/>
</dbReference>
<dbReference type="InterPro" id="IPR036236">
    <property type="entry name" value="Znf_C2H2_sf"/>
</dbReference>
<dbReference type="InterPro" id="IPR013087">
    <property type="entry name" value="Znf_C2H2_type"/>
</dbReference>
<dbReference type="PANTHER" id="PTHR23235:SF159">
    <property type="entry name" value="KRUEPPEL-LIKE FACTOR 17"/>
    <property type="match status" value="1"/>
</dbReference>
<dbReference type="PANTHER" id="PTHR23235">
    <property type="entry name" value="KRUEPPEL-LIKE TRANSCRIPTION FACTOR"/>
    <property type="match status" value="1"/>
</dbReference>
<dbReference type="Pfam" id="PF00096">
    <property type="entry name" value="zf-C2H2"/>
    <property type="match status" value="3"/>
</dbReference>
<dbReference type="SMART" id="SM00355">
    <property type="entry name" value="ZnF_C2H2"/>
    <property type="match status" value="3"/>
</dbReference>
<dbReference type="SUPFAM" id="SSF57667">
    <property type="entry name" value="beta-beta-alpha zinc fingers"/>
    <property type="match status" value="2"/>
</dbReference>
<dbReference type="PROSITE" id="PS00028">
    <property type="entry name" value="ZINC_FINGER_C2H2_1"/>
    <property type="match status" value="3"/>
</dbReference>
<dbReference type="PROSITE" id="PS50157">
    <property type="entry name" value="ZINC_FINGER_C2H2_2"/>
    <property type="match status" value="3"/>
</dbReference>
<name>KLF17_HUMAN</name>
<feature type="chain" id="PRO_0000047555" description="Krueppel-like factor 17">
    <location>
        <begin position="1"/>
        <end position="389"/>
    </location>
</feature>
<feature type="zinc finger region" description="C2H2-type 1" evidence="2">
    <location>
        <begin position="283"/>
        <end position="307"/>
    </location>
</feature>
<feature type="zinc finger region" description="C2H2-type 2" evidence="2">
    <location>
        <begin position="313"/>
        <end position="337"/>
    </location>
</feature>
<feature type="zinc finger region" description="C2H2-type 3" evidence="2">
    <location>
        <begin position="343"/>
        <end position="365"/>
    </location>
</feature>
<feature type="region of interest" description="Disordered" evidence="3">
    <location>
        <begin position="1"/>
        <end position="48"/>
    </location>
</feature>
<feature type="region of interest" description="Disordered" evidence="3">
    <location>
        <begin position="239"/>
        <end position="279"/>
    </location>
</feature>
<feature type="region of interest" description="Disordered" evidence="3">
    <location>
        <begin position="356"/>
        <end position="389"/>
    </location>
</feature>
<feature type="compositionally biased region" description="Polar residues" evidence="3">
    <location>
        <begin position="26"/>
        <end position="38"/>
    </location>
</feature>
<feature type="compositionally biased region" description="Basic and acidic residues" evidence="3">
    <location>
        <begin position="264"/>
        <end position="278"/>
    </location>
</feature>
<feature type="compositionally biased region" description="Polar residues" evidence="3">
    <location>
        <begin position="372"/>
        <end position="381"/>
    </location>
</feature>
<feature type="sequence variant" id="VAR_052719" description="In dbSNP:rs11210969." evidence="4">
    <original>I</original>
    <variation>N</variation>
    <location>
        <position position="35"/>
    </location>
</feature>
<feature type="sequence variant" id="VAR_052720" description="In dbSNP:rs2429051." evidence="4 5">
    <original>S</original>
    <variation>T</variation>
    <location>
        <position position="57"/>
    </location>
</feature>
<feature type="sequence variant" id="VAR_052721" description="In dbSNP:rs6656945.">
    <original>Q</original>
    <variation>H</variation>
    <location>
        <position position="80"/>
    </location>
</feature>
<feature type="sequence variant" id="VAR_026198" description="In dbSNP:rs2485652." evidence="5">
    <original>N</original>
    <variation>S</variation>
    <location>
        <position position="156"/>
    </location>
</feature>
<evidence type="ECO:0000250" key="1"/>
<evidence type="ECO:0000255" key="2">
    <source>
        <dbReference type="PROSITE-ProRule" id="PRU00042"/>
    </source>
</evidence>
<evidence type="ECO:0000256" key="3">
    <source>
        <dbReference type="SAM" id="MobiDB-lite"/>
    </source>
</evidence>
<evidence type="ECO:0000269" key="4">
    <source>
    </source>
</evidence>
<evidence type="ECO:0000269" key="5">
    <source>
    </source>
</evidence>
<evidence type="ECO:0000269" key="6">
    <source>
    </source>
</evidence>
<evidence type="ECO:0000305" key="7"/>